<organism>
    <name type="scientific">Dictyostelium discoideum</name>
    <name type="common">Social amoeba</name>
    <dbReference type="NCBI Taxonomy" id="44689"/>
    <lineage>
        <taxon>Eukaryota</taxon>
        <taxon>Amoebozoa</taxon>
        <taxon>Evosea</taxon>
        <taxon>Eumycetozoa</taxon>
        <taxon>Dictyostelia</taxon>
        <taxon>Dictyosteliales</taxon>
        <taxon>Dictyosteliaceae</taxon>
        <taxon>Dictyostelium</taxon>
    </lineage>
</organism>
<comment type="function">
    <text>Protease that may act during cell growth and/or development.</text>
</comment>
<comment type="catalytic activity">
    <reaction>
        <text>Specificity similar to, but narrower than, that of pepsin A. Does not cleave the 4-Gln-|-His-5 bond in B chain of insulin.</text>
        <dbReference type="EC" id="3.4.23.5"/>
    </reaction>
</comment>
<comment type="subunit">
    <text evidence="5">Monomer.</text>
</comment>
<comment type="subcellular location">
    <subcellularLocation>
        <location evidence="5">Lysosome</location>
    </subcellularLocation>
    <subcellularLocation>
        <location evidence="5">Secreted</location>
    </subcellularLocation>
</comment>
<comment type="developmental stage">
    <text evidence="5">Expressed in both vegetative and differentiating cells, with a higher level in vegetative cells.</text>
</comment>
<comment type="PTM">
    <text evidence="5">N-glycosylated on 2 out of the 3 potential sites. Glycans contain sulfated Mannose.</text>
</comment>
<comment type="similarity">
    <text evidence="6">Belongs to the peptidase A1 family.</text>
</comment>
<sequence length="383" mass="41121">MKLLILTLFLATIVLAQALTVPLNFHQASRESRRRVPQKWSNRLSALNAGTTIPISDFEDAQYYGAITIGTPGQAFKVVFDTGSSNLWIPSKKCPITVVACDLHNKYNSGASSTYVANGTDFTIQYGSGAMSGFVSQDSVTVGSLTVKDQLFAEATAEPGIAFDFAKFDGILGLAFQSISVNSIPPVFYNMLSQGLVSSTLFSFWLSRTPGANGGELSFGSIDNTKYTGDITYVPLTNETYWEFVMDDFAIDGQSAGFCGTTCHAICDSGTSLIAGPMADITALNEKLGAVILNGEGVFSDCSVINTLPNVTITVAGREFVLTPKEYVLEVTEFGKTECLSGFMGIELNMGNFWILGDVFISAYYTVFDFGNKQVGFATAIQG</sequence>
<dbReference type="EC" id="3.4.23.5"/>
<dbReference type="EMBL" id="Y16962">
    <property type="protein sequence ID" value="CAA76563.1"/>
    <property type="molecule type" value="mRNA"/>
</dbReference>
<dbReference type="EMBL" id="AJ243946">
    <property type="protein sequence ID" value="CAB57223.1"/>
    <property type="molecule type" value="Genomic_DNA"/>
</dbReference>
<dbReference type="EMBL" id="AAFI02000031">
    <property type="protein sequence ID" value="EAL67644.1"/>
    <property type="molecule type" value="Genomic_DNA"/>
</dbReference>
<dbReference type="RefSeq" id="XP_641645.1">
    <property type="nucleotide sequence ID" value="XM_636553.1"/>
</dbReference>
<dbReference type="SMR" id="O76856"/>
<dbReference type="FunCoup" id="O76856">
    <property type="interactions" value="145"/>
</dbReference>
<dbReference type="STRING" id="44689.O76856"/>
<dbReference type="MEROPS" id="A01.A89"/>
<dbReference type="GlyCosmos" id="O76856">
    <property type="glycosylation" value="3 sites, No reported glycans"/>
</dbReference>
<dbReference type="GlyGen" id="O76856">
    <property type="glycosylation" value="3 sites"/>
</dbReference>
<dbReference type="PaxDb" id="44689-DDB0215012"/>
<dbReference type="EnsemblProtists" id="EAL67644">
    <property type="protein sequence ID" value="EAL67644"/>
    <property type="gene ID" value="DDB_G0279411"/>
</dbReference>
<dbReference type="GeneID" id="8622052"/>
<dbReference type="KEGG" id="ddi:DDB_G0279411"/>
<dbReference type="dictyBase" id="DDB_G0279411">
    <property type="gene designation" value="ctsD"/>
</dbReference>
<dbReference type="VEuPathDB" id="AmoebaDB:DDB_G0279411"/>
<dbReference type="eggNOG" id="KOG1339">
    <property type="taxonomic scope" value="Eukaryota"/>
</dbReference>
<dbReference type="HOGENOM" id="CLU_013253_3_2_1"/>
<dbReference type="InParanoid" id="O76856"/>
<dbReference type="OMA" id="KGEYMIS"/>
<dbReference type="PhylomeDB" id="O76856"/>
<dbReference type="Reactome" id="R-DDI-2132295">
    <property type="pathway name" value="MHC class II antigen presentation"/>
</dbReference>
<dbReference type="Reactome" id="R-DDI-5683826">
    <property type="pathway name" value="Surfactant metabolism"/>
</dbReference>
<dbReference type="Reactome" id="R-DDI-6798695">
    <property type="pathway name" value="Neutrophil degranulation"/>
</dbReference>
<dbReference type="PRO" id="PR:O76856"/>
<dbReference type="Proteomes" id="UP000002195">
    <property type="component" value="Chromosome 3"/>
</dbReference>
<dbReference type="GO" id="GO:0005769">
    <property type="term" value="C:early endosome"/>
    <property type="evidence" value="ECO:0000314"/>
    <property type="project" value="dictyBase"/>
</dbReference>
<dbReference type="GO" id="GO:0032009">
    <property type="term" value="C:early phagosome"/>
    <property type="evidence" value="ECO:0000314"/>
    <property type="project" value="dictyBase"/>
</dbReference>
<dbReference type="GO" id="GO:0005576">
    <property type="term" value="C:extracellular region"/>
    <property type="evidence" value="ECO:0000314"/>
    <property type="project" value="dictyBase"/>
</dbReference>
<dbReference type="GO" id="GO:0005764">
    <property type="term" value="C:lysosome"/>
    <property type="evidence" value="ECO:0000314"/>
    <property type="project" value="dictyBase"/>
</dbReference>
<dbReference type="GO" id="GO:0045335">
    <property type="term" value="C:phagocytic vesicle"/>
    <property type="evidence" value="ECO:0000314"/>
    <property type="project" value="dictyBase"/>
</dbReference>
<dbReference type="GO" id="GO:0004190">
    <property type="term" value="F:aspartic-type endopeptidase activity"/>
    <property type="evidence" value="ECO:0000318"/>
    <property type="project" value="GO_Central"/>
</dbReference>
<dbReference type="GO" id="GO:0006887">
    <property type="term" value="P:exocytosis"/>
    <property type="evidence" value="ECO:0000314"/>
    <property type="project" value="dictyBase"/>
</dbReference>
<dbReference type="GO" id="GO:0012501">
    <property type="term" value="P:programmed cell death"/>
    <property type="evidence" value="ECO:0000314"/>
    <property type="project" value="dictyBase"/>
</dbReference>
<dbReference type="GO" id="GO:0006508">
    <property type="term" value="P:proteolysis"/>
    <property type="evidence" value="ECO:0000318"/>
    <property type="project" value="GO_Central"/>
</dbReference>
<dbReference type="FunFam" id="2.40.70.10:FF:000149">
    <property type="entry name" value="Uncharacterized protein"/>
    <property type="match status" value="1"/>
</dbReference>
<dbReference type="FunFam" id="2.40.70.10:FF:000002">
    <property type="entry name" value="Vacuolar aspartic proteinase"/>
    <property type="match status" value="1"/>
</dbReference>
<dbReference type="Gene3D" id="2.40.70.10">
    <property type="entry name" value="Acid Proteases"/>
    <property type="match status" value="2"/>
</dbReference>
<dbReference type="InterPro" id="IPR001461">
    <property type="entry name" value="Aspartic_peptidase_A1"/>
</dbReference>
<dbReference type="InterPro" id="IPR001969">
    <property type="entry name" value="Aspartic_peptidase_AS"/>
</dbReference>
<dbReference type="InterPro" id="IPR033121">
    <property type="entry name" value="PEPTIDASE_A1"/>
</dbReference>
<dbReference type="InterPro" id="IPR021109">
    <property type="entry name" value="Peptidase_aspartic_dom_sf"/>
</dbReference>
<dbReference type="PANTHER" id="PTHR47966">
    <property type="entry name" value="BETA-SITE APP-CLEAVING ENZYME, ISOFORM A-RELATED"/>
    <property type="match status" value="1"/>
</dbReference>
<dbReference type="PANTHER" id="PTHR47966:SF51">
    <property type="entry name" value="BETA-SITE APP-CLEAVING ENZYME, ISOFORM A-RELATED"/>
    <property type="match status" value="1"/>
</dbReference>
<dbReference type="Pfam" id="PF00026">
    <property type="entry name" value="Asp"/>
    <property type="match status" value="1"/>
</dbReference>
<dbReference type="PRINTS" id="PR00792">
    <property type="entry name" value="PEPSIN"/>
</dbReference>
<dbReference type="SUPFAM" id="SSF50630">
    <property type="entry name" value="Acid proteases"/>
    <property type="match status" value="1"/>
</dbReference>
<dbReference type="PROSITE" id="PS00141">
    <property type="entry name" value="ASP_PROTEASE"/>
    <property type="match status" value="1"/>
</dbReference>
<dbReference type="PROSITE" id="PS51767">
    <property type="entry name" value="PEPTIDASE_A1"/>
    <property type="match status" value="1"/>
</dbReference>
<gene>
    <name type="primary">ctsD</name>
    <name type="synonym">CatD</name>
    <name type="ORF">DDB_G0279411</name>
</gene>
<reference key="1">
    <citation type="journal article" date="1999" name="J. Cell Sci.">
        <title>Characterization of Dictyostelium discoideum cathepsin D. Molecular cloning, gene disruption, endo-lysosomal localization and sugar modifications.</title>
        <authorList>
            <person name="Journet A."/>
            <person name="Chapel A."/>
            <person name="Jehan S."/>
            <person name="Adessi C."/>
            <person name="Freeze H."/>
            <person name="Klein G."/>
            <person name="Garin J."/>
        </authorList>
    </citation>
    <scope>NUCLEOTIDE SEQUENCE [GENOMIC DNA / MRNA]</scope>
    <scope>PROTEIN SEQUENCE OF 49-56; 77-92; 103-116; 269-278; 325-336 AND 370-383</scope>
    <scope>SUBUNIT</scope>
    <scope>SUBCELLULAR LOCATION</scope>
    <scope>DEVELOPMENTAL STAGE</scope>
    <scope>GLYCOSYLATION</scope>
    <source>
        <strain>AX2</strain>
    </source>
</reference>
<reference key="2">
    <citation type="journal article" date="2005" name="Nature">
        <title>The genome of the social amoeba Dictyostelium discoideum.</title>
        <authorList>
            <person name="Eichinger L."/>
            <person name="Pachebat J.A."/>
            <person name="Gloeckner G."/>
            <person name="Rajandream M.A."/>
            <person name="Sucgang R."/>
            <person name="Berriman M."/>
            <person name="Song J."/>
            <person name="Olsen R."/>
            <person name="Szafranski K."/>
            <person name="Xu Q."/>
            <person name="Tunggal B."/>
            <person name="Kummerfeld S."/>
            <person name="Madera M."/>
            <person name="Konfortov B.A."/>
            <person name="Rivero F."/>
            <person name="Bankier A.T."/>
            <person name="Lehmann R."/>
            <person name="Hamlin N."/>
            <person name="Davies R."/>
            <person name="Gaudet P."/>
            <person name="Fey P."/>
            <person name="Pilcher K."/>
            <person name="Chen G."/>
            <person name="Saunders D."/>
            <person name="Sodergren E.J."/>
            <person name="Davis P."/>
            <person name="Kerhornou A."/>
            <person name="Nie X."/>
            <person name="Hall N."/>
            <person name="Anjard C."/>
            <person name="Hemphill L."/>
            <person name="Bason N."/>
            <person name="Farbrother P."/>
            <person name="Desany B."/>
            <person name="Just E."/>
            <person name="Morio T."/>
            <person name="Rost R."/>
            <person name="Churcher C.M."/>
            <person name="Cooper J."/>
            <person name="Haydock S."/>
            <person name="van Driessche N."/>
            <person name="Cronin A."/>
            <person name="Goodhead I."/>
            <person name="Muzny D.M."/>
            <person name="Mourier T."/>
            <person name="Pain A."/>
            <person name="Lu M."/>
            <person name="Harper D."/>
            <person name="Lindsay R."/>
            <person name="Hauser H."/>
            <person name="James K.D."/>
            <person name="Quiles M."/>
            <person name="Madan Babu M."/>
            <person name="Saito T."/>
            <person name="Buchrieser C."/>
            <person name="Wardroper A."/>
            <person name="Felder M."/>
            <person name="Thangavelu M."/>
            <person name="Johnson D."/>
            <person name="Knights A."/>
            <person name="Loulseged H."/>
            <person name="Mungall K.L."/>
            <person name="Oliver K."/>
            <person name="Price C."/>
            <person name="Quail M.A."/>
            <person name="Urushihara H."/>
            <person name="Hernandez J."/>
            <person name="Rabbinowitsch E."/>
            <person name="Steffen D."/>
            <person name="Sanders M."/>
            <person name="Ma J."/>
            <person name="Kohara Y."/>
            <person name="Sharp S."/>
            <person name="Simmonds M.N."/>
            <person name="Spiegler S."/>
            <person name="Tivey A."/>
            <person name="Sugano S."/>
            <person name="White B."/>
            <person name="Walker D."/>
            <person name="Woodward J.R."/>
            <person name="Winckler T."/>
            <person name="Tanaka Y."/>
            <person name="Shaulsky G."/>
            <person name="Schleicher M."/>
            <person name="Weinstock G.M."/>
            <person name="Rosenthal A."/>
            <person name="Cox E.C."/>
            <person name="Chisholm R.L."/>
            <person name="Gibbs R.A."/>
            <person name="Loomis W.F."/>
            <person name="Platzer M."/>
            <person name="Kay R.R."/>
            <person name="Williams J.G."/>
            <person name="Dear P.H."/>
            <person name="Noegel A.A."/>
            <person name="Barrell B.G."/>
            <person name="Kuspa A."/>
        </authorList>
    </citation>
    <scope>NUCLEOTIDE SEQUENCE [LARGE SCALE GENOMIC DNA]</scope>
    <source>
        <strain>AX4</strain>
    </source>
</reference>
<evidence type="ECO:0000250" key="1"/>
<evidence type="ECO:0000255" key="2"/>
<evidence type="ECO:0000255" key="3">
    <source>
        <dbReference type="PROSITE-ProRule" id="PRU01103"/>
    </source>
</evidence>
<evidence type="ECO:0000255" key="4">
    <source>
        <dbReference type="PROSITE-ProRule" id="PRU10094"/>
    </source>
</evidence>
<evidence type="ECO:0000269" key="5">
    <source>
    </source>
</evidence>
<evidence type="ECO:0000305" key="6"/>
<proteinExistence type="evidence at protein level"/>
<feature type="signal peptide" evidence="2">
    <location>
        <begin position="1"/>
        <end position="18"/>
    </location>
</feature>
<feature type="propeptide" id="PRO_0000327788" evidence="5">
    <location>
        <begin position="19"/>
        <end position="48"/>
    </location>
</feature>
<feature type="chain" id="PRO_5000147291" description="Cathepsin D">
    <location>
        <begin position="49"/>
        <end position="383"/>
    </location>
</feature>
<feature type="domain" description="Peptidase A1" evidence="3">
    <location>
        <begin position="63"/>
        <end position="378"/>
    </location>
</feature>
<feature type="active site" evidence="4">
    <location>
        <position position="81"/>
    </location>
</feature>
<feature type="active site" evidence="4">
    <location>
        <position position="268"/>
    </location>
</feature>
<feature type="glycosylation site" description="N-linked (GlcNAc...) asparagine" evidence="2">
    <location>
        <position position="118"/>
    </location>
</feature>
<feature type="glycosylation site" description="N-linked (GlcNAc...) asparagine" evidence="2">
    <location>
        <position position="238"/>
    </location>
</feature>
<feature type="glycosylation site" description="N-linked (GlcNAc...) asparagine" evidence="2">
    <location>
        <position position="310"/>
    </location>
</feature>
<feature type="disulfide bond" evidence="1">
    <location>
        <begin position="94"/>
        <end position="101"/>
    </location>
</feature>
<feature type="disulfide bond" evidence="1">
    <location>
        <begin position="259"/>
        <end position="263"/>
    </location>
</feature>
<feature type="disulfide bond" evidence="1">
    <location>
        <begin position="302"/>
        <end position="339"/>
    </location>
</feature>
<accession>O76856</accession>
<accession>Q54WS2</accession>
<protein>
    <recommendedName>
        <fullName>Cathepsin D</fullName>
        <ecNumber>3.4.23.5</ecNumber>
    </recommendedName>
    <alternativeName>
        <fullName>Ddp44</fullName>
    </alternativeName>
</protein>
<keyword id="KW-0064">Aspartyl protease</keyword>
<keyword id="KW-0903">Direct protein sequencing</keyword>
<keyword id="KW-1015">Disulfide bond</keyword>
<keyword id="KW-0325">Glycoprotein</keyword>
<keyword id="KW-0378">Hydrolase</keyword>
<keyword id="KW-0458">Lysosome</keyword>
<keyword id="KW-0645">Protease</keyword>
<keyword id="KW-1185">Reference proteome</keyword>
<keyword id="KW-0964">Secreted</keyword>
<keyword id="KW-0732">Signal</keyword>
<keyword id="KW-0865">Zymogen</keyword>
<name>CATD_DICDI</name>